<accession>P37478</accession>
<keyword id="KW-0002">3D-structure</keyword>
<keyword id="KW-0963">Cytoplasm</keyword>
<keyword id="KW-0238">DNA-binding</keyword>
<keyword id="KW-0597">Phosphoprotein</keyword>
<keyword id="KW-1185">Reference proteome</keyword>
<keyword id="KW-0804">Transcription</keyword>
<keyword id="KW-0805">Transcription regulation</keyword>
<keyword id="KW-0902">Two-component regulatory system</keyword>
<reference key="1">
    <citation type="journal article" date="1994" name="DNA Res.">
        <title>Systematic sequencing of the 180 kilobase region of the Bacillus subtilis chromosome containing the replication origin.</title>
        <authorList>
            <person name="Ogasawara N."/>
            <person name="Nakai S."/>
            <person name="Yoshikawa H."/>
        </authorList>
    </citation>
    <scope>NUCLEOTIDE SEQUENCE [GENOMIC DNA]</scope>
    <source>
        <strain>168</strain>
    </source>
</reference>
<reference key="2">
    <citation type="journal article" date="1997" name="DNA Res.">
        <title>Sequence analysis of the 36-kb region between gntZ and trnY genes of Bacillus subtilis genome.</title>
        <authorList>
            <person name="Kasahara Y."/>
            <person name="Nakai S."/>
            <person name="Ogasawara N."/>
        </authorList>
    </citation>
    <scope>NUCLEOTIDE SEQUENCE [GENOMIC DNA]</scope>
    <source>
        <strain>168</strain>
    </source>
</reference>
<reference key="3">
    <citation type="journal article" date="1997" name="Nature">
        <title>The complete genome sequence of the Gram-positive bacterium Bacillus subtilis.</title>
        <authorList>
            <person name="Kunst F."/>
            <person name="Ogasawara N."/>
            <person name="Moszer I."/>
            <person name="Albertini A.M."/>
            <person name="Alloni G."/>
            <person name="Azevedo V."/>
            <person name="Bertero M.G."/>
            <person name="Bessieres P."/>
            <person name="Bolotin A."/>
            <person name="Borchert S."/>
            <person name="Borriss R."/>
            <person name="Boursier L."/>
            <person name="Brans A."/>
            <person name="Braun M."/>
            <person name="Brignell S.C."/>
            <person name="Bron S."/>
            <person name="Brouillet S."/>
            <person name="Bruschi C.V."/>
            <person name="Caldwell B."/>
            <person name="Capuano V."/>
            <person name="Carter N.M."/>
            <person name="Choi S.-K."/>
            <person name="Codani J.-J."/>
            <person name="Connerton I.F."/>
            <person name="Cummings N.J."/>
            <person name="Daniel R.A."/>
            <person name="Denizot F."/>
            <person name="Devine K.M."/>
            <person name="Duesterhoeft A."/>
            <person name="Ehrlich S.D."/>
            <person name="Emmerson P.T."/>
            <person name="Entian K.-D."/>
            <person name="Errington J."/>
            <person name="Fabret C."/>
            <person name="Ferrari E."/>
            <person name="Foulger D."/>
            <person name="Fritz C."/>
            <person name="Fujita M."/>
            <person name="Fujita Y."/>
            <person name="Fuma S."/>
            <person name="Galizzi A."/>
            <person name="Galleron N."/>
            <person name="Ghim S.-Y."/>
            <person name="Glaser P."/>
            <person name="Goffeau A."/>
            <person name="Golightly E.J."/>
            <person name="Grandi G."/>
            <person name="Guiseppi G."/>
            <person name="Guy B.J."/>
            <person name="Haga K."/>
            <person name="Haiech J."/>
            <person name="Harwood C.R."/>
            <person name="Henaut A."/>
            <person name="Hilbert H."/>
            <person name="Holsappel S."/>
            <person name="Hosono S."/>
            <person name="Hullo M.-F."/>
            <person name="Itaya M."/>
            <person name="Jones L.-M."/>
            <person name="Joris B."/>
            <person name="Karamata D."/>
            <person name="Kasahara Y."/>
            <person name="Klaerr-Blanchard M."/>
            <person name="Klein C."/>
            <person name="Kobayashi Y."/>
            <person name="Koetter P."/>
            <person name="Koningstein G."/>
            <person name="Krogh S."/>
            <person name="Kumano M."/>
            <person name="Kurita K."/>
            <person name="Lapidus A."/>
            <person name="Lardinois S."/>
            <person name="Lauber J."/>
            <person name="Lazarevic V."/>
            <person name="Lee S.-M."/>
            <person name="Levine A."/>
            <person name="Liu H."/>
            <person name="Masuda S."/>
            <person name="Mauel C."/>
            <person name="Medigue C."/>
            <person name="Medina N."/>
            <person name="Mellado R.P."/>
            <person name="Mizuno M."/>
            <person name="Moestl D."/>
            <person name="Nakai S."/>
            <person name="Noback M."/>
            <person name="Noone D."/>
            <person name="O'Reilly M."/>
            <person name="Ogawa K."/>
            <person name="Ogiwara A."/>
            <person name="Oudega B."/>
            <person name="Park S.-H."/>
            <person name="Parro V."/>
            <person name="Pohl T.M."/>
            <person name="Portetelle D."/>
            <person name="Porwollik S."/>
            <person name="Prescott A.M."/>
            <person name="Presecan E."/>
            <person name="Pujic P."/>
            <person name="Purnelle B."/>
            <person name="Rapoport G."/>
            <person name="Rey M."/>
            <person name="Reynolds S."/>
            <person name="Rieger M."/>
            <person name="Rivolta C."/>
            <person name="Rocha E."/>
            <person name="Roche B."/>
            <person name="Rose M."/>
            <person name="Sadaie Y."/>
            <person name="Sato T."/>
            <person name="Scanlan E."/>
            <person name="Schleich S."/>
            <person name="Schroeter R."/>
            <person name="Scoffone F."/>
            <person name="Sekiguchi J."/>
            <person name="Sekowska A."/>
            <person name="Seror S.J."/>
            <person name="Serror P."/>
            <person name="Shin B.-S."/>
            <person name="Soldo B."/>
            <person name="Sorokin A."/>
            <person name="Tacconi E."/>
            <person name="Takagi T."/>
            <person name="Takahashi H."/>
            <person name="Takemaru K."/>
            <person name="Takeuchi M."/>
            <person name="Tamakoshi A."/>
            <person name="Tanaka T."/>
            <person name="Terpstra P."/>
            <person name="Tognoni A."/>
            <person name="Tosato V."/>
            <person name="Uchiyama S."/>
            <person name="Vandenbol M."/>
            <person name="Vannier F."/>
            <person name="Vassarotti A."/>
            <person name="Viari A."/>
            <person name="Wambutt R."/>
            <person name="Wedler E."/>
            <person name="Wedler H."/>
            <person name="Weitzenegger T."/>
            <person name="Winters P."/>
            <person name="Wipat A."/>
            <person name="Yamamoto H."/>
            <person name="Yamane K."/>
            <person name="Yasumoto K."/>
            <person name="Yata K."/>
            <person name="Yoshida K."/>
            <person name="Yoshikawa H.-F."/>
            <person name="Zumstein E."/>
            <person name="Yoshikawa H."/>
            <person name="Danchin A."/>
        </authorList>
    </citation>
    <scope>NUCLEOTIDE SEQUENCE [LARGE SCALE GENOMIC DNA]</scope>
    <source>
        <strain>168</strain>
    </source>
</reference>
<reference key="4">
    <citation type="journal article" date="1998" name="J. Bacteriol.">
        <title>A two-component signal transduction system essential for growth of Bacillus subtilis: implications for anti-infective therapy.</title>
        <authorList>
            <person name="Fabret C."/>
            <person name="Hoch J.A."/>
        </authorList>
    </citation>
    <scope>FUNCTION</scope>
    <scope>MUTAGENESIS OF HIS-215</scope>
    <source>
        <strain>168 / JH642</strain>
    </source>
</reference>
<reference key="5">
    <citation type="journal article" date="2000" name="Microbiology">
        <title>The essential two-component regulatory system encoded by yycF and yycG modulates expression of the ftsAZ operon in Bacillus subtilis.</title>
        <authorList>
            <person name="Fukuchi K."/>
            <person name="Kasahara Y."/>
            <person name="Asai K."/>
            <person name="Kobayashi K."/>
            <person name="Moriya S."/>
            <person name="Ogasawara N."/>
        </authorList>
    </citation>
    <scope>FUNCTION</scope>
    <scope>MUTAGENESIS OF ASP-53</scope>
    <source>
        <strain>168</strain>
    </source>
</reference>
<reference key="6">
    <citation type="journal article" date="2001" name="Biosci. Biotechnol. Biochem.">
        <title>Antibacterial agents that inhibit histidine protein kinase YycG of Bacillus subtilis.</title>
        <authorList>
            <person name="Yamamoto K."/>
            <person name="Kitayama T."/>
            <person name="Minagawa S."/>
            <person name="Watanabe T."/>
            <person name="Sawada S."/>
            <person name="Okamoto T."/>
            <person name="Utsumi R."/>
        </authorList>
    </citation>
    <scope>PHOSPHORYLATION</scope>
</reference>
<reference key="7">
    <citation type="journal article" date="2003" name="J. Mol. Microbiol. Biotechnol.">
        <title>Molecular characterization of the essential response regulator protein YycF in Bacillus subtilis.</title>
        <authorList>
            <person name="Watanabe T."/>
            <person name="Hashimoto Y."/>
            <person name="Umemoto Y."/>
            <person name="Tatebe D."/>
            <person name="Furuta E."/>
            <person name="Fukamizo T."/>
            <person name="Yamamoto K."/>
            <person name="Utsumi R."/>
        </authorList>
    </citation>
    <scope>MUTAGENESIS OF HIS-215</scope>
    <scope>SUBUNIT</scope>
</reference>
<reference key="8">
    <citation type="journal article" date="2003" name="Mol. Microbiol.">
        <title>Genes controlled by the essential YycG/YycF two-component system of Bacillus subtilis revealed through a novel hybrid regulator approach.</title>
        <authorList>
            <person name="Howell A."/>
            <person name="Dubrac S."/>
            <person name="Andersen K.K."/>
            <person name="Noone D."/>
            <person name="Fert J."/>
            <person name="Msadek T."/>
            <person name="Devine K."/>
        </authorList>
    </citation>
    <scope>STUDY OF THE WALR/WALK REGULON</scope>
</reference>
<reference key="9">
    <citation type="journal article" date="2007" name="Mol. Microbiol.">
        <title>The essential YycFG two-component system controls cell wall metabolism in Bacillus subtilis.</title>
        <authorList>
            <person name="Bisicchia P."/>
            <person name="Noone D."/>
            <person name="Lioliou E."/>
            <person name="Howell A."/>
            <person name="Quigley S."/>
            <person name="Jensen T."/>
            <person name="Jarmer H."/>
            <person name="Devine K.M."/>
        </authorList>
    </citation>
    <scope>FUNCTION</scope>
</reference>
<organism>
    <name type="scientific">Bacillus subtilis (strain 168)</name>
    <dbReference type="NCBI Taxonomy" id="224308"/>
    <lineage>
        <taxon>Bacteria</taxon>
        <taxon>Bacillati</taxon>
        <taxon>Bacillota</taxon>
        <taxon>Bacilli</taxon>
        <taxon>Bacillales</taxon>
        <taxon>Bacillaceae</taxon>
        <taxon>Bacillus</taxon>
    </lineage>
</organism>
<dbReference type="EMBL" id="D26185">
    <property type="protein sequence ID" value="BAA05173.1"/>
    <property type="molecule type" value="Genomic_DNA"/>
</dbReference>
<dbReference type="EMBL" id="D78193">
    <property type="protein sequence ID" value="BAA11300.1"/>
    <property type="molecule type" value="Genomic_DNA"/>
</dbReference>
<dbReference type="EMBL" id="AL009126">
    <property type="protein sequence ID" value="CAB16078.1"/>
    <property type="molecule type" value="Genomic_DNA"/>
</dbReference>
<dbReference type="PIR" id="S65967">
    <property type="entry name" value="S65967"/>
</dbReference>
<dbReference type="RefSeq" id="NP_391921.1">
    <property type="nucleotide sequence ID" value="NC_000964.3"/>
</dbReference>
<dbReference type="RefSeq" id="WP_003244363.1">
    <property type="nucleotide sequence ID" value="NZ_OZ025638.1"/>
</dbReference>
<dbReference type="PDB" id="2D1V">
    <property type="method" value="X-ray"/>
    <property type="resolution" value="2.40 A"/>
    <property type="chains" value="A=128-235"/>
</dbReference>
<dbReference type="PDB" id="2ZWM">
    <property type="method" value="X-ray"/>
    <property type="resolution" value="2.04 A"/>
    <property type="chains" value="A/B=1-122"/>
</dbReference>
<dbReference type="PDB" id="3F6P">
    <property type="method" value="X-ray"/>
    <property type="resolution" value="1.95 A"/>
    <property type="chains" value="A=1-120"/>
</dbReference>
<dbReference type="PDBsum" id="2D1V"/>
<dbReference type="PDBsum" id="2ZWM"/>
<dbReference type="PDBsum" id="3F6P"/>
<dbReference type="SMR" id="P37478"/>
<dbReference type="FunCoup" id="P37478">
    <property type="interactions" value="493"/>
</dbReference>
<dbReference type="STRING" id="224308.BSU40410"/>
<dbReference type="jPOST" id="P37478"/>
<dbReference type="PaxDb" id="224308-BSU40410"/>
<dbReference type="EnsemblBacteria" id="CAB16078">
    <property type="protein sequence ID" value="CAB16078"/>
    <property type="gene ID" value="BSU_40410"/>
</dbReference>
<dbReference type="GeneID" id="86871315"/>
<dbReference type="GeneID" id="937776"/>
<dbReference type="KEGG" id="bsu:BSU40410"/>
<dbReference type="PATRIC" id="fig|224308.179.peg.4374"/>
<dbReference type="eggNOG" id="COG0745">
    <property type="taxonomic scope" value="Bacteria"/>
</dbReference>
<dbReference type="InParanoid" id="P37478"/>
<dbReference type="OrthoDB" id="9790442at2"/>
<dbReference type="PhylomeDB" id="P37478"/>
<dbReference type="BioCyc" id="BSUB:BSU40410-MONOMER"/>
<dbReference type="EvolutionaryTrace" id="P37478"/>
<dbReference type="PRO" id="PR:P37478"/>
<dbReference type="Proteomes" id="UP000001570">
    <property type="component" value="Chromosome"/>
</dbReference>
<dbReference type="GO" id="GO:0005829">
    <property type="term" value="C:cytosol"/>
    <property type="evidence" value="ECO:0000318"/>
    <property type="project" value="GO_Central"/>
</dbReference>
<dbReference type="GO" id="GO:0032993">
    <property type="term" value="C:protein-DNA complex"/>
    <property type="evidence" value="ECO:0000318"/>
    <property type="project" value="GO_Central"/>
</dbReference>
<dbReference type="GO" id="GO:0000156">
    <property type="term" value="F:phosphorelay response regulator activity"/>
    <property type="evidence" value="ECO:0000318"/>
    <property type="project" value="GO_Central"/>
</dbReference>
<dbReference type="GO" id="GO:0000976">
    <property type="term" value="F:transcription cis-regulatory region binding"/>
    <property type="evidence" value="ECO:0000318"/>
    <property type="project" value="GO_Central"/>
</dbReference>
<dbReference type="GO" id="GO:0006355">
    <property type="term" value="P:regulation of DNA-templated transcription"/>
    <property type="evidence" value="ECO:0000315"/>
    <property type="project" value="CACAO"/>
</dbReference>
<dbReference type="CDD" id="cd17614">
    <property type="entry name" value="REC_OmpR_YycF-like"/>
    <property type="match status" value="1"/>
</dbReference>
<dbReference type="CDD" id="cd00383">
    <property type="entry name" value="trans_reg_C"/>
    <property type="match status" value="1"/>
</dbReference>
<dbReference type="FunFam" id="1.10.10.10:FF:000089">
    <property type="entry name" value="Alkaline phosphatase synthesis response regulator"/>
    <property type="match status" value="1"/>
</dbReference>
<dbReference type="FunFam" id="3.40.50.2300:FF:000052">
    <property type="entry name" value="DNA-binding response regulator YycF"/>
    <property type="match status" value="1"/>
</dbReference>
<dbReference type="Gene3D" id="3.40.50.2300">
    <property type="match status" value="1"/>
</dbReference>
<dbReference type="Gene3D" id="6.10.250.690">
    <property type="match status" value="1"/>
</dbReference>
<dbReference type="Gene3D" id="1.10.10.10">
    <property type="entry name" value="Winged helix-like DNA-binding domain superfamily/Winged helix DNA-binding domain"/>
    <property type="match status" value="1"/>
</dbReference>
<dbReference type="InterPro" id="IPR011006">
    <property type="entry name" value="CheY-like_superfamily"/>
</dbReference>
<dbReference type="InterPro" id="IPR001867">
    <property type="entry name" value="OmpR/PhoB-type_DNA-bd"/>
</dbReference>
<dbReference type="InterPro" id="IPR047791">
    <property type="entry name" value="Resp_reg_WalR"/>
</dbReference>
<dbReference type="InterPro" id="IPR016032">
    <property type="entry name" value="Sig_transdc_resp-reg_C-effctor"/>
</dbReference>
<dbReference type="InterPro" id="IPR001789">
    <property type="entry name" value="Sig_transdc_resp-reg_receiver"/>
</dbReference>
<dbReference type="InterPro" id="IPR039420">
    <property type="entry name" value="WalR-like"/>
</dbReference>
<dbReference type="InterPro" id="IPR036388">
    <property type="entry name" value="WH-like_DNA-bd_sf"/>
</dbReference>
<dbReference type="NCBIfam" id="NF040534">
    <property type="entry name" value="resp_reg_YycF"/>
    <property type="match status" value="1"/>
</dbReference>
<dbReference type="PANTHER" id="PTHR48111:SF40">
    <property type="entry name" value="PHOSPHATE REGULON TRANSCRIPTIONAL REGULATORY PROTEIN PHOB"/>
    <property type="match status" value="1"/>
</dbReference>
<dbReference type="PANTHER" id="PTHR48111">
    <property type="entry name" value="REGULATOR OF RPOS"/>
    <property type="match status" value="1"/>
</dbReference>
<dbReference type="Pfam" id="PF00072">
    <property type="entry name" value="Response_reg"/>
    <property type="match status" value="1"/>
</dbReference>
<dbReference type="Pfam" id="PF00486">
    <property type="entry name" value="Trans_reg_C"/>
    <property type="match status" value="1"/>
</dbReference>
<dbReference type="SMART" id="SM00448">
    <property type="entry name" value="REC"/>
    <property type="match status" value="1"/>
</dbReference>
<dbReference type="SMART" id="SM00862">
    <property type="entry name" value="Trans_reg_C"/>
    <property type="match status" value="1"/>
</dbReference>
<dbReference type="SUPFAM" id="SSF46894">
    <property type="entry name" value="C-terminal effector domain of the bipartite response regulators"/>
    <property type="match status" value="1"/>
</dbReference>
<dbReference type="SUPFAM" id="SSF52172">
    <property type="entry name" value="CheY-like"/>
    <property type="match status" value="1"/>
</dbReference>
<dbReference type="PROSITE" id="PS51755">
    <property type="entry name" value="OMPR_PHOB"/>
    <property type="match status" value="1"/>
</dbReference>
<dbReference type="PROSITE" id="PS50110">
    <property type="entry name" value="RESPONSE_REGULATORY"/>
    <property type="match status" value="1"/>
</dbReference>
<protein>
    <recommendedName>
        <fullName evidence="10">Transcriptional regulatory protein WalR</fullName>
    </recommendedName>
</protein>
<name>WALR_BACSU</name>
<feature type="chain" id="PRO_0000081399" description="Transcriptional regulatory protein WalR">
    <location>
        <begin position="1"/>
        <end position="235"/>
    </location>
</feature>
<feature type="domain" description="Response regulatory" evidence="2">
    <location>
        <begin position="4"/>
        <end position="117"/>
    </location>
</feature>
<feature type="DNA-binding region" description="OmpR/PhoB-type" evidence="3">
    <location>
        <begin position="132"/>
        <end position="231"/>
    </location>
</feature>
<feature type="modified residue" description="4-aspartylphosphate" evidence="10">
    <location>
        <position position="53"/>
    </location>
</feature>
<feature type="mutagenesis site" description="Constitutively active." evidence="4">
    <original>D</original>
    <variation>H</variation>
    <location>
        <position position="53"/>
    </location>
</feature>
<feature type="mutagenesis site" description="In JH17041; thermosensitive; decrease in dimerization and DNA-binding." evidence="7 9">
    <original>H</original>
    <variation>P</variation>
    <location>
        <position position="215"/>
    </location>
</feature>
<feature type="strand" evidence="13">
    <location>
        <begin position="4"/>
        <end position="8"/>
    </location>
</feature>
<feature type="helix" evidence="13">
    <location>
        <begin position="12"/>
        <end position="24"/>
    </location>
</feature>
<feature type="strand" evidence="13">
    <location>
        <begin position="28"/>
        <end position="34"/>
    </location>
</feature>
<feature type="helix" evidence="13">
    <location>
        <begin position="35"/>
        <end position="43"/>
    </location>
</feature>
<feature type="strand" evidence="13">
    <location>
        <begin position="48"/>
        <end position="53"/>
    </location>
</feature>
<feature type="turn" evidence="13">
    <location>
        <begin position="57"/>
        <end position="59"/>
    </location>
</feature>
<feature type="helix" evidence="13">
    <location>
        <begin position="60"/>
        <end position="69"/>
    </location>
</feature>
<feature type="strand" evidence="13">
    <location>
        <begin position="76"/>
        <end position="83"/>
    </location>
</feature>
<feature type="helix" evidence="13">
    <location>
        <begin position="85"/>
        <end position="93"/>
    </location>
</feature>
<feature type="strand" evidence="13">
    <location>
        <begin position="98"/>
        <end position="103"/>
    </location>
</feature>
<feature type="helix" evidence="13">
    <location>
        <begin position="106"/>
        <end position="117"/>
    </location>
</feature>
<feature type="strand" evidence="12">
    <location>
        <begin position="135"/>
        <end position="137"/>
    </location>
</feature>
<feature type="strand" evidence="12">
    <location>
        <begin position="140"/>
        <end position="143"/>
    </location>
</feature>
<feature type="turn" evidence="12">
    <location>
        <begin position="144"/>
        <end position="147"/>
    </location>
</feature>
<feature type="strand" evidence="12">
    <location>
        <begin position="148"/>
        <end position="151"/>
    </location>
</feature>
<feature type="helix" evidence="12">
    <location>
        <begin position="160"/>
        <end position="171"/>
    </location>
</feature>
<feature type="turn" evidence="12">
    <location>
        <begin position="172"/>
        <end position="174"/>
    </location>
</feature>
<feature type="helix" evidence="12">
    <location>
        <begin position="179"/>
        <end position="187"/>
    </location>
</feature>
<feature type="helix" evidence="12">
    <location>
        <begin position="196"/>
        <end position="209"/>
    </location>
</feature>
<feature type="strand" evidence="12">
    <location>
        <begin position="217"/>
        <end position="222"/>
    </location>
</feature>
<feature type="turn" evidence="12">
    <location>
        <begin position="223"/>
        <end position="225"/>
    </location>
</feature>
<feature type="strand" evidence="12">
    <location>
        <begin position="226"/>
        <end position="229"/>
    </location>
</feature>
<evidence type="ECO:0000250" key="1">
    <source>
        <dbReference type="UniProtKB" id="Q2G2U6"/>
    </source>
</evidence>
<evidence type="ECO:0000255" key="2">
    <source>
        <dbReference type="PROSITE-ProRule" id="PRU00169"/>
    </source>
</evidence>
<evidence type="ECO:0000255" key="3">
    <source>
        <dbReference type="PROSITE-ProRule" id="PRU01091"/>
    </source>
</evidence>
<evidence type="ECO:0000269" key="4">
    <source>
    </source>
</evidence>
<evidence type="ECO:0000269" key="5">
    <source>
    </source>
</evidence>
<evidence type="ECO:0000269" key="6">
    <source>
    </source>
</evidence>
<evidence type="ECO:0000269" key="7">
    <source>
    </source>
</evidence>
<evidence type="ECO:0000269" key="8">
    <source>
    </source>
</evidence>
<evidence type="ECO:0000269" key="9">
    <source>
    </source>
</evidence>
<evidence type="ECO:0000305" key="10"/>
<evidence type="ECO:0000312" key="11">
    <source>
        <dbReference type="EMBL" id="CAB16078.1"/>
    </source>
</evidence>
<evidence type="ECO:0007829" key="12">
    <source>
        <dbReference type="PDB" id="2D1V"/>
    </source>
</evidence>
<evidence type="ECO:0007829" key="13">
    <source>
        <dbReference type="PDB" id="3F6P"/>
    </source>
</evidence>
<gene>
    <name evidence="1 11" type="primary">walR</name>
    <name type="synonym">yycF</name>
    <name type="ordered locus">BSU40410</name>
</gene>
<sequence length="235" mass="27226">MDKKILVVDDEKPIADILEFNLRKEGYEVHCAHDGNEAVEMVEELQPDLILLDIMLPNKDGVEVCREVRKKYDMPIIMLTAKDSEIDKVIGLEIGADDYVTKPFSTRELLARVKANLRRQLTTAPAEEEPSSNEIHIGSLVIFPDAYVVSKRDETIELTHREFELLHYLAKHIGQVMTREHLLQTVWGYDYFGDVRTVDVTVRRLREKIEDNPSHPNWIVTRRGVGYYLRNPEQD</sequence>
<proteinExistence type="evidence at protein level"/>
<comment type="function">
    <text evidence="4 6 8 9">Member of the two-component regulatory system WalK/WalR involved in the regulation of the ftsAZ operon, the yocH, ykvT, cwlO, lytE, ydjM, yjeA, yoeB genes and the tagAB and tagDEF operons. Binds to the ftsAZ P1 promoter sequence in vitro. WalR has been shown to directly bind to the regulatory regions of yocH, ykvT, tagAB/tagDEF. Activates cwlO, lytE and ydjM and represses yoeB and yjeA.</text>
</comment>
<comment type="subunit">
    <text evidence="7">Homodimer.</text>
</comment>
<comment type="subcellular location">
    <subcellularLocation>
        <location evidence="10">Cytoplasm</location>
    </subcellularLocation>
</comment>
<comment type="developmental stage">
    <text>Expressed during exponential growth and shut down at the entry into stationary phase.</text>
</comment>
<comment type="PTM">
    <text evidence="5">Phosphorylated by WalK.</text>
</comment>